<feature type="transit peptide" description="Chloroplast" evidence="2">
    <location>
        <begin position="1"/>
        <end position="67"/>
    </location>
</feature>
<feature type="chain" id="PRO_0000006033" description="Oxygen-dependent coproporphyrinogen-III oxidase, chloroplastic">
    <location>
        <begin position="68"/>
        <end position="385"/>
    </location>
</feature>
<feature type="region of interest" description="Important for dimerization" evidence="1">
    <location>
        <begin position="124"/>
        <end position="133"/>
    </location>
</feature>
<feature type="region of interest" description="Important for dimerization" evidence="1">
    <location>
        <begin position="325"/>
        <end position="360"/>
    </location>
</feature>
<feature type="active site" description="Proton donor" evidence="1">
    <location>
        <position position="187"/>
    </location>
</feature>
<feature type="binding site" evidence="1">
    <location>
        <position position="173"/>
    </location>
    <ligand>
        <name>substrate</name>
    </ligand>
</feature>
<feature type="binding site" evidence="1">
    <location>
        <begin position="189"/>
        <end position="191"/>
    </location>
    <ligand>
        <name>substrate</name>
    </ligand>
</feature>
<feature type="binding site" evidence="1">
    <location>
        <begin position="343"/>
        <end position="348"/>
    </location>
    <ligand>
        <name>substrate</name>
    </ligand>
</feature>
<feature type="site" description="Important for dimerization" evidence="1">
    <location>
        <position position="260"/>
    </location>
</feature>
<keyword id="KW-0149">Chlorophyll biosynthesis</keyword>
<keyword id="KW-0150">Chloroplast</keyword>
<keyword id="KW-0350">Heme biosynthesis</keyword>
<keyword id="KW-0560">Oxidoreductase</keyword>
<keyword id="KW-0934">Plastid</keyword>
<keyword id="KW-0627">Porphyrin biosynthesis</keyword>
<keyword id="KW-1185">Reference proteome</keyword>
<keyword id="KW-0809">Transit peptide</keyword>
<organism>
    <name type="scientific">Glycine max</name>
    <name type="common">Soybean</name>
    <name type="synonym">Glycine hispida</name>
    <dbReference type="NCBI Taxonomy" id="3847"/>
    <lineage>
        <taxon>Eukaryota</taxon>
        <taxon>Viridiplantae</taxon>
        <taxon>Streptophyta</taxon>
        <taxon>Embryophyta</taxon>
        <taxon>Tracheophyta</taxon>
        <taxon>Spermatophyta</taxon>
        <taxon>Magnoliopsida</taxon>
        <taxon>eudicotyledons</taxon>
        <taxon>Gunneridae</taxon>
        <taxon>Pentapetalae</taxon>
        <taxon>rosids</taxon>
        <taxon>fabids</taxon>
        <taxon>Fabales</taxon>
        <taxon>Fabaceae</taxon>
        <taxon>Papilionoideae</taxon>
        <taxon>50 kb inversion clade</taxon>
        <taxon>NPAAA clade</taxon>
        <taxon>indigoferoid/millettioid clade</taxon>
        <taxon>Phaseoleae</taxon>
        <taxon>Glycine</taxon>
        <taxon>Glycine subgen. Soja</taxon>
    </lineage>
</organism>
<accession>P35055</accession>
<gene>
    <name type="primary">CPX</name>
</gene>
<evidence type="ECO:0000250" key="1"/>
<evidence type="ECO:0000255" key="2"/>
<evidence type="ECO:0000305" key="3"/>
<name>HEM6_SOYBN</name>
<sequence>MMHCASIVSAPSYAFPFRSGSASTTPTAISLTKRSWKPPPSMAKGPVRATVSIEKETPEANRPETFLRGVDEAQSSTSVRARFEKMIREAQDTVCSALEAADGGAQFKEDVWSRPGGGGGISRVLQDGAVWEKAGVNVSVVYGVMPPDAYRAAKGVPTDQKPGPVPFFAAGISSVLHPKNPFAPTLHFNYRYFETDAPKDAPGAPRQWWFGGGTDLTPAYIFEEDVKHFHSIQKQACDKFEPTFYPRFKKWCDDYFYIKHRGERRGLGGIFFDDLNDYDQEMLLSFATECANSVIPAYLPIIEKRKDLPFNDHQKAWQQLRRGRYVEFNLVYDRGTTFGLKTGGRIESILVSLPLTARWEYDHKPEEGSEEWKLLDACINPKEWI</sequence>
<reference key="1">
    <citation type="journal article" date="1993" name="Plant Mol. Biol.">
        <title>A soybean coproporphyrinogen oxidase gene is highly expressed in root nodules.</title>
        <authorList>
            <person name="Madsen O."/>
            <person name="Sandal L."/>
            <person name="Sandal N.N."/>
            <person name="Marcker K.A."/>
        </authorList>
    </citation>
    <scope>NUCLEOTIDE SEQUENCE [GENOMIC DNA]</scope>
    <source>
        <strain>cv. Evans</strain>
        <tissue>Root nodule</tissue>
    </source>
</reference>
<dbReference type="EC" id="1.3.3.3"/>
<dbReference type="EMBL" id="X71083">
    <property type="protein sequence ID" value="CAA50401.1"/>
    <property type="molecule type" value="Genomic_DNA"/>
</dbReference>
<dbReference type="EMBL" id="X71083">
    <property type="protein sequence ID" value="CAA50400.1"/>
    <property type="molecule type" value="Genomic_DNA"/>
</dbReference>
<dbReference type="PIR" id="S39523">
    <property type="entry name" value="S39523"/>
</dbReference>
<dbReference type="SMR" id="P35055"/>
<dbReference type="FunCoup" id="P35055">
    <property type="interactions" value="6615"/>
</dbReference>
<dbReference type="STRING" id="3847.P35055"/>
<dbReference type="PaxDb" id="3847-GLYMA14G00620.2"/>
<dbReference type="ProMEX" id="P35055"/>
<dbReference type="eggNOG" id="KOG1518">
    <property type="taxonomic scope" value="Eukaryota"/>
</dbReference>
<dbReference type="InParanoid" id="P35055"/>
<dbReference type="BioCyc" id="MetaCyc:MONOMER-11768"/>
<dbReference type="UniPathway" id="UPA00251">
    <property type="reaction ID" value="UER00322"/>
</dbReference>
<dbReference type="Proteomes" id="UP000008827">
    <property type="component" value="Unplaced"/>
</dbReference>
<dbReference type="GO" id="GO:0009507">
    <property type="term" value="C:chloroplast"/>
    <property type="evidence" value="ECO:0007669"/>
    <property type="project" value="UniProtKB-SubCell"/>
</dbReference>
<dbReference type="GO" id="GO:0005737">
    <property type="term" value="C:cytoplasm"/>
    <property type="evidence" value="ECO:0000318"/>
    <property type="project" value="GO_Central"/>
</dbReference>
<dbReference type="GO" id="GO:0004109">
    <property type="term" value="F:coproporphyrinogen oxidase activity"/>
    <property type="evidence" value="ECO:0000318"/>
    <property type="project" value="GO_Central"/>
</dbReference>
<dbReference type="GO" id="GO:0042803">
    <property type="term" value="F:protein homodimerization activity"/>
    <property type="evidence" value="ECO:0000250"/>
    <property type="project" value="UniProtKB"/>
</dbReference>
<dbReference type="GO" id="GO:0015995">
    <property type="term" value="P:chlorophyll biosynthetic process"/>
    <property type="evidence" value="ECO:0007669"/>
    <property type="project" value="UniProtKB-KW"/>
</dbReference>
<dbReference type="GO" id="GO:0006782">
    <property type="term" value="P:protoporphyrinogen IX biosynthetic process"/>
    <property type="evidence" value="ECO:0000318"/>
    <property type="project" value="GO_Central"/>
</dbReference>
<dbReference type="FunFam" id="3.40.1500.10:FF:000003">
    <property type="entry name" value="oxygen-dependent coproporphyrinogen-III oxidase, chloroplastic"/>
    <property type="match status" value="1"/>
</dbReference>
<dbReference type="Gene3D" id="3.40.1500.10">
    <property type="entry name" value="Coproporphyrinogen III oxidase, aerobic"/>
    <property type="match status" value="1"/>
</dbReference>
<dbReference type="InterPro" id="IPR001260">
    <property type="entry name" value="Coprogen_oxidase_aer"/>
</dbReference>
<dbReference type="InterPro" id="IPR036406">
    <property type="entry name" value="Coprogen_oxidase_aer_sf"/>
</dbReference>
<dbReference type="InterPro" id="IPR018375">
    <property type="entry name" value="Coprogen_oxidase_CS"/>
</dbReference>
<dbReference type="NCBIfam" id="NF003727">
    <property type="entry name" value="PRK05330.1"/>
    <property type="match status" value="1"/>
</dbReference>
<dbReference type="PANTHER" id="PTHR10755">
    <property type="entry name" value="COPROPORPHYRINOGEN III OXIDASE, MITOCHONDRIAL"/>
    <property type="match status" value="1"/>
</dbReference>
<dbReference type="PANTHER" id="PTHR10755:SF0">
    <property type="entry name" value="OXYGEN-DEPENDENT COPROPORPHYRINOGEN-III OXIDASE, MITOCHONDRIAL"/>
    <property type="match status" value="1"/>
</dbReference>
<dbReference type="Pfam" id="PF01218">
    <property type="entry name" value="Coprogen_oxidas"/>
    <property type="match status" value="1"/>
</dbReference>
<dbReference type="PIRSF" id="PIRSF000166">
    <property type="entry name" value="Coproporphyri_ox"/>
    <property type="match status" value="1"/>
</dbReference>
<dbReference type="PRINTS" id="PR00073">
    <property type="entry name" value="COPRGNOXDASE"/>
</dbReference>
<dbReference type="SUPFAM" id="SSF102886">
    <property type="entry name" value="Coproporphyrinogen III oxidase"/>
    <property type="match status" value="1"/>
</dbReference>
<dbReference type="PROSITE" id="PS01021">
    <property type="entry name" value="COPROGEN_OXIDASE"/>
    <property type="match status" value="1"/>
</dbReference>
<protein>
    <recommendedName>
        <fullName>Oxygen-dependent coproporphyrinogen-III oxidase, chloroplastic</fullName>
        <shortName>Coprogen oxidase</shortName>
        <shortName>Coproporphyrinogenase</shortName>
        <ecNumber>1.3.3.3</ecNumber>
    </recommendedName>
</protein>
<comment type="function">
    <text evidence="1">Involved in the heme and chlorophyll biosynthesis. Catalyzes the aerobic oxidative decarboxylation of propionate groups of rings A and B of coproporphyrinogen-III to yield the vinyl groups in protoporphyrinogen-IX (By similarity).</text>
</comment>
<comment type="catalytic activity">
    <reaction>
        <text>coproporphyrinogen III + O2 + 2 H(+) = protoporphyrinogen IX + 2 CO2 + 2 H2O</text>
        <dbReference type="Rhea" id="RHEA:18257"/>
        <dbReference type="ChEBI" id="CHEBI:15377"/>
        <dbReference type="ChEBI" id="CHEBI:15378"/>
        <dbReference type="ChEBI" id="CHEBI:15379"/>
        <dbReference type="ChEBI" id="CHEBI:16526"/>
        <dbReference type="ChEBI" id="CHEBI:57307"/>
        <dbReference type="ChEBI" id="CHEBI:57309"/>
        <dbReference type="EC" id="1.3.3.3"/>
    </reaction>
</comment>
<comment type="activity regulation">
    <text>Probably regulated by oxygen tension.</text>
</comment>
<comment type="pathway">
    <text>Porphyrin-containing compound metabolism; protoporphyrin-IX biosynthesis; protoporphyrinogen-IX from coproporphyrinogen-III (O2 route): step 1/1.</text>
</comment>
<comment type="subunit">
    <text evidence="1">Homodimer.</text>
</comment>
<comment type="subcellular location">
    <subcellularLocation>
        <location evidence="3">Plastid</location>
        <location evidence="3">Chloroplast</location>
    </subcellularLocation>
</comment>
<comment type="tissue specificity">
    <text>Highly expressed in nodules and to a lesser extent in leaves. Not detected in roots.</text>
</comment>
<comment type="developmental stage">
    <text>Expression starts 10-12 days after infection and continues during the lifetime of the nodule.</text>
</comment>
<comment type="similarity">
    <text evidence="3">Belongs to the aerobic coproporphyrinogen-III oxidase family.</text>
</comment>
<proteinExistence type="evidence at transcript level"/>